<evidence type="ECO:0000250" key="1"/>
<evidence type="ECO:0000255" key="2">
    <source>
        <dbReference type="HAMAP-Rule" id="MF_00223"/>
    </source>
</evidence>
<gene>
    <name evidence="2" type="primary">folE</name>
    <name type="ordered locus">HS_0910</name>
</gene>
<organism>
    <name type="scientific">Histophilus somni (strain 129Pt)</name>
    <name type="common">Haemophilus somnus</name>
    <dbReference type="NCBI Taxonomy" id="205914"/>
    <lineage>
        <taxon>Bacteria</taxon>
        <taxon>Pseudomonadati</taxon>
        <taxon>Pseudomonadota</taxon>
        <taxon>Gammaproteobacteria</taxon>
        <taxon>Pasteurellales</taxon>
        <taxon>Pasteurellaceae</taxon>
        <taxon>Histophilus</taxon>
    </lineage>
</organism>
<keyword id="KW-0342">GTP-binding</keyword>
<keyword id="KW-0378">Hydrolase</keyword>
<keyword id="KW-0479">Metal-binding</keyword>
<keyword id="KW-0547">Nucleotide-binding</keyword>
<keyword id="KW-0554">One-carbon metabolism</keyword>
<keyword id="KW-0862">Zinc</keyword>
<proteinExistence type="inferred from homology"/>
<comment type="catalytic activity">
    <reaction evidence="2">
        <text>GTP + H2O = 7,8-dihydroneopterin 3'-triphosphate + formate + H(+)</text>
        <dbReference type="Rhea" id="RHEA:17473"/>
        <dbReference type="ChEBI" id="CHEBI:15377"/>
        <dbReference type="ChEBI" id="CHEBI:15378"/>
        <dbReference type="ChEBI" id="CHEBI:15740"/>
        <dbReference type="ChEBI" id="CHEBI:37565"/>
        <dbReference type="ChEBI" id="CHEBI:58462"/>
        <dbReference type="EC" id="3.5.4.16"/>
    </reaction>
</comment>
<comment type="pathway">
    <text evidence="2">Cofactor biosynthesis; 7,8-dihydroneopterin triphosphate biosynthesis; 7,8-dihydroneopterin triphosphate from GTP: step 1/1.</text>
</comment>
<comment type="subunit">
    <text evidence="1">Toroid-shaped homodecamer, composed of two pentamers of five dimers.</text>
</comment>
<comment type="similarity">
    <text evidence="2">Belongs to the GTP cyclohydrolase I family.</text>
</comment>
<feature type="chain" id="PRO_1000043697" description="GTP cyclohydrolase 1">
    <location>
        <begin position="1"/>
        <end position="218"/>
    </location>
</feature>
<feature type="binding site" evidence="2">
    <location>
        <position position="109"/>
    </location>
    <ligand>
        <name>Zn(2+)</name>
        <dbReference type="ChEBI" id="CHEBI:29105"/>
    </ligand>
</feature>
<feature type="binding site" evidence="2">
    <location>
        <position position="112"/>
    </location>
    <ligand>
        <name>Zn(2+)</name>
        <dbReference type="ChEBI" id="CHEBI:29105"/>
    </ligand>
</feature>
<feature type="binding site" evidence="2">
    <location>
        <position position="180"/>
    </location>
    <ligand>
        <name>Zn(2+)</name>
        <dbReference type="ChEBI" id="CHEBI:29105"/>
    </ligand>
</feature>
<name>GCH1_HISS1</name>
<protein>
    <recommendedName>
        <fullName evidence="2">GTP cyclohydrolase 1</fullName>
        <ecNumber evidence="2">3.5.4.16</ecNumber>
    </recommendedName>
    <alternativeName>
        <fullName evidence="2">GTP cyclohydrolase I</fullName>
        <shortName evidence="2">GTP-CH-I</shortName>
    </alternativeName>
</protein>
<accession>Q0I3F6</accession>
<sequence length="218" mass="24906">MSNLSPEAIKVRNALVEKGIETPMIDLVQDKDQRRQGIEQHMREVIKLIGLDLSDDSLEETPARLSKMFIDEIFSGLDYANFPKITNIENRMKVSEMVLVDDVTLTSTCEHHFVTIDGKVSVAYYPQKWVIGLSKINRVVAFFAQRPQVQERLTQQILLAFQTILETEDVAVYVKATHFCVKCRGIKDTNSYTVTSAFGGVFLDDRETRKEFLTLLKK</sequence>
<dbReference type="EC" id="3.5.4.16" evidence="2"/>
<dbReference type="EMBL" id="CP000436">
    <property type="protein sequence ID" value="ABI25185.1"/>
    <property type="molecule type" value="Genomic_DNA"/>
</dbReference>
<dbReference type="SMR" id="Q0I3F6"/>
<dbReference type="KEGG" id="hso:HS_0910"/>
<dbReference type="eggNOG" id="COG0302">
    <property type="taxonomic scope" value="Bacteria"/>
</dbReference>
<dbReference type="HOGENOM" id="CLU_049768_3_2_6"/>
<dbReference type="UniPathway" id="UPA00848">
    <property type="reaction ID" value="UER00151"/>
</dbReference>
<dbReference type="GO" id="GO:0005737">
    <property type="term" value="C:cytoplasm"/>
    <property type="evidence" value="ECO:0007669"/>
    <property type="project" value="TreeGrafter"/>
</dbReference>
<dbReference type="GO" id="GO:0005525">
    <property type="term" value="F:GTP binding"/>
    <property type="evidence" value="ECO:0007669"/>
    <property type="project" value="UniProtKB-KW"/>
</dbReference>
<dbReference type="GO" id="GO:0003934">
    <property type="term" value="F:GTP cyclohydrolase I activity"/>
    <property type="evidence" value="ECO:0007669"/>
    <property type="project" value="UniProtKB-UniRule"/>
</dbReference>
<dbReference type="GO" id="GO:0008270">
    <property type="term" value="F:zinc ion binding"/>
    <property type="evidence" value="ECO:0007669"/>
    <property type="project" value="UniProtKB-UniRule"/>
</dbReference>
<dbReference type="GO" id="GO:0006730">
    <property type="term" value="P:one-carbon metabolic process"/>
    <property type="evidence" value="ECO:0007669"/>
    <property type="project" value="UniProtKB-UniRule"/>
</dbReference>
<dbReference type="GO" id="GO:0006729">
    <property type="term" value="P:tetrahydrobiopterin biosynthetic process"/>
    <property type="evidence" value="ECO:0007669"/>
    <property type="project" value="TreeGrafter"/>
</dbReference>
<dbReference type="GO" id="GO:0046654">
    <property type="term" value="P:tetrahydrofolate biosynthetic process"/>
    <property type="evidence" value="ECO:0007669"/>
    <property type="project" value="UniProtKB-UniRule"/>
</dbReference>
<dbReference type="FunFam" id="3.30.1130.10:FF:000001">
    <property type="entry name" value="GTP cyclohydrolase 1"/>
    <property type="match status" value="1"/>
</dbReference>
<dbReference type="Gene3D" id="1.10.286.10">
    <property type="match status" value="1"/>
</dbReference>
<dbReference type="Gene3D" id="3.30.1130.10">
    <property type="match status" value="1"/>
</dbReference>
<dbReference type="HAMAP" id="MF_00223">
    <property type="entry name" value="FolE"/>
    <property type="match status" value="1"/>
</dbReference>
<dbReference type="InterPro" id="IPR043133">
    <property type="entry name" value="GTP-CH-I_C/QueF"/>
</dbReference>
<dbReference type="InterPro" id="IPR043134">
    <property type="entry name" value="GTP-CH-I_N"/>
</dbReference>
<dbReference type="InterPro" id="IPR001474">
    <property type="entry name" value="GTP_CycHdrlase_I"/>
</dbReference>
<dbReference type="InterPro" id="IPR018234">
    <property type="entry name" value="GTP_CycHdrlase_I_CS"/>
</dbReference>
<dbReference type="InterPro" id="IPR020602">
    <property type="entry name" value="GTP_CycHdrlase_I_dom"/>
</dbReference>
<dbReference type="NCBIfam" id="TIGR00063">
    <property type="entry name" value="folE"/>
    <property type="match status" value="1"/>
</dbReference>
<dbReference type="NCBIfam" id="NF006824">
    <property type="entry name" value="PRK09347.1-1"/>
    <property type="match status" value="1"/>
</dbReference>
<dbReference type="NCBIfam" id="NF006826">
    <property type="entry name" value="PRK09347.1-3"/>
    <property type="match status" value="1"/>
</dbReference>
<dbReference type="PANTHER" id="PTHR11109:SF7">
    <property type="entry name" value="GTP CYCLOHYDROLASE 1"/>
    <property type="match status" value="1"/>
</dbReference>
<dbReference type="PANTHER" id="PTHR11109">
    <property type="entry name" value="GTP CYCLOHYDROLASE I"/>
    <property type="match status" value="1"/>
</dbReference>
<dbReference type="Pfam" id="PF01227">
    <property type="entry name" value="GTP_cyclohydroI"/>
    <property type="match status" value="1"/>
</dbReference>
<dbReference type="SUPFAM" id="SSF55620">
    <property type="entry name" value="Tetrahydrobiopterin biosynthesis enzymes-like"/>
    <property type="match status" value="1"/>
</dbReference>
<dbReference type="PROSITE" id="PS00859">
    <property type="entry name" value="GTP_CYCLOHYDROL_1_1"/>
    <property type="match status" value="1"/>
</dbReference>
<dbReference type="PROSITE" id="PS00860">
    <property type="entry name" value="GTP_CYCLOHYDROL_1_2"/>
    <property type="match status" value="1"/>
</dbReference>
<reference key="1">
    <citation type="journal article" date="2007" name="J. Bacteriol.">
        <title>Complete genome sequence of Haemophilus somnus (Histophilus somni) strain 129Pt and comparison to Haemophilus ducreyi 35000HP and Haemophilus influenzae Rd.</title>
        <authorList>
            <person name="Challacombe J.F."/>
            <person name="Duncan A.J."/>
            <person name="Brettin T.S."/>
            <person name="Bruce D."/>
            <person name="Chertkov O."/>
            <person name="Detter J.C."/>
            <person name="Han C.S."/>
            <person name="Misra M."/>
            <person name="Richardson P."/>
            <person name="Tapia R."/>
            <person name="Thayer N."/>
            <person name="Xie G."/>
            <person name="Inzana T.J."/>
        </authorList>
    </citation>
    <scope>NUCLEOTIDE SEQUENCE [LARGE SCALE GENOMIC DNA]</scope>
    <source>
        <strain>129Pt</strain>
    </source>
</reference>